<evidence type="ECO:0000250" key="1">
    <source>
        <dbReference type="UniProtKB" id="A8D8P8"/>
    </source>
</evidence>
<evidence type="ECO:0000250" key="2">
    <source>
        <dbReference type="UniProtKB" id="Q9JMB7"/>
    </source>
</evidence>
<evidence type="ECO:0000255" key="3">
    <source>
        <dbReference type="PROSITE-ProRule" id="PRU00142"/>
    </source>
</evidence>
<evidence type="ECO:0000255" key="4">
    <source>
        <dbReference type="PROSITE-ProRule" id="PRU00150"/>
    </source>
</evidence>
<evidence type="ECO:0000256" key="5">
    <source>
        <dbReference type="SAM" id="MobiDB-lite"/>
    </source>
</evidence>
<evidence type="ECO:0000269" key="6">
    <source>
    </source>
</evidence>
<evidence type="ECO:0000269" key="7">
    <source>
    </source>
</evidence>
<evidence type="ECO:0000269" key="8">
    <source>
    </source>
</evidence>
<evidence type="ECO:0000269" key="9">
    <source>
    </source>
</evidence>
<evidence type="ECO:0000269" key="10">
    <source>
    </source>
</evidence>
<evidence type="ECO:0000269" key="11">
    <source>
    </source>
</evidence>
<evidence type="ECO:0000269" key="12">
    <source>
    </source>
</evidence>
<evidence type="ECO:0000269" key="13">
    <source>
    </source>
</evidence>
<evidence type="ECO:0000269" key="14">
    <source>
    </source>
</evidence>
<evidence type="ECO:0000303" key="15">
    <source>
    </source>
</evidence>
<evidence type="ECO:0000303" key="16">
    <source>
    </source>
</evidence>
<evidence type="ECO:0000303" key="17">
    <source>
    </source>
</evidence>
<evidence type="ECO:0000305" key="18"/>
<evidence type="ECO:0000305" key="19">
    <source>
    </source>
</evidence>
<evidence type="ECO:0007744" key="20">
    <source>
        <dbReference type="PDB" id="2L5C"/>
    </source>
</evidence>
<evidence type="ECO:0007744" key="21">
    <source>
        <dbReference type="PDB" id="2L5D"/>
    </source>
</evidence>
<evidence type="ECO:0007829" key="22">
    <source>
        <dbReference type="PDB" id="2L5C"/>
    </source>
</evidence>
<evidence type="ECO:0007829" key="23">
    <source>
        <dbReference type="PDB" id="2L5D"/>
    </source>
</evidence>
<evidence type="ECO:0007829" key="24">
    <source>
        <dbReference type="PDB" id="3O6E"/>
    </source>
</evidence>
<evidence type="ECO:0007829" key="25">
    <source>
        <dbReference type="PDB" id="3O7V"/>
    </source>
</evidence>
<accession>Q96J94</accession>
<accession>A4F266</accession>
<accession>O95404</accession>
<accession>Q8NA60</accession>
<accession>Q8TBY5</accession>
<accession>Q96JD5</accession>
<sequence length="861" mass="98603">MTGRARARARGRARGQETAQLVGSTASQQPGYIQPRPQPPPAEGELFGRGRQRGTAGGTAKSQGLQISAGFQELSLAERGGRRRDFHDLGVNTRQNLDHVKESKTGSSGIIVRLSTNHFRLTSRPQWALYQYHIDYNPLMEARRLRSALLFQHEDLIGKCHAFDGTILFLPKRLQQKVTEVFSKTRNGEDVRITITLTNELPPTSPTCLQFYNIIFRRLLKIMNLQQIGRNYYNPNDPIDIPSHRLVIWPGFTTSILQYENSIMLCTDVSHKVLRSETVLDFMFNFYHQTEEHKFQEQVSKELIGLVVLTKYNNKTYRVDDIDWDQNPKSTFKKADGSEVSFLEYYRKQYNQEITDLKQPVLVSQPKRRRGPGGTLPGPAMLIPELCYLTGLTDKMRNDFNVMKDLAVHTRLTPEQRQREVGRLIDYIHKNDNVQRELRDWGLSFDSNLLSFSGRILQTEKIHQGGKTFDYNPQFADWSKETRGAPLISVKPLDNWLLIYTRRNYEAANSLIQNLFKVTPAMGMQMRKAIMIEVDDRTEAYLRVLQQKVTADTQIVVCLLSSNRKDKYDAIKKYLCTDCPTPSQCVVARTLGKQQTVMAIATKIALQMNCKMGGELWRVDIPLKLVMIVGIDCYHDMTAGRRSIAGFVASINEGMTRWFSRCIFQDRGQELVDGLKVCLQAALRAWNSCNEYMPSRIIVYRDGVGDGQLKTLVNYEVPQFLDCLKSIGRGYNPRLTVIVVKKRVNTRFFAQSGGRLQNPLPGTVIDVEVTRPEWYDFFIVSQAVRSGSVSPTHYNVIYDNSGLKPDHIQRLTYKLCHIYYNWPGVIRVPAPCQYAHKLAFLVGQSIHREPNLSLSNRLYYL</sequence>
<dbReference type="EC" id="3.1.26.-" evidence="2"/>
<dbReference type="EMBL" id="AF264004">
    <property type="protein sequence ID" value="AAK92281.1"/>
    <property type="molecule type" value="mRNA"/>
</dbReference>
<dbReference type="EMBL" id="AF104260">
    <property type="protein sequence ID" value="AAC97371.2"/>
    <property type="molecule type" value="mRNA"/>
</dbReference>
<dbReference type="EMBL" id="AF387507">
    <property type="protein sequence ID" value="AAK69348.1"/>
    <property type="molecule type" value="mRNA"/>
</dbReference>
<dbReference type="EMBL" id="AK093133">
    <property type="protein sequence ID" value="BAC04068.1"/>
    <property type="molecule type" value="mRNA"/>
</dbReference>
<dbReference type="EMBL" id="BC028581">
    <property type="protein sequence ID" value="AAH28581.1"/>
    <property type="molecule type" value="mRNA"/>
</dbReference>
<dbReference type="EMBL" id="AB274731">
    <property type="protein sequence ID" value="BAF49084.1"/>
    <property type="molecule type" value="mRNA"/>
</dbReference>
<dbReference type="CCDS" id="CCDS9268.1">
    <molecule id="Q96J94-1"/>
</dbReference>
<dbReference type="RefSeq" id="NP_001177900.1">
    <molecule id="Q96J94-2"/>
    <property type="nucleotide sequence ID" value="NM_001190971.2"/>
</dbReference>
<dbReference type="RefSeq" id="NP_004755.2">
    <molecule id="Q96J94-1"/>
    <property type="nucleotide sequence ID" value="NM_004764.5"/>
</dbReference>
<dbReference type="RefSeq" id="XP_011537304.1">
    <molecule id="Q96J94-1"/>
    <property type="nucleotide sequence ID" value="XM_011539002.4"/>
</dbReference>
<dbReference type="RefSeq" id="XP_011537305.1">
    <molecule id="Q96J94-1"/>
    <property type="nucleotide sequence ID" value="XM_011539003.4"/>
</dbReference>
<dbReference type="RefSeq" id="XP_011537306.1">
    <molecule id="Q96J94-1"/>
    <property type="nucleotide sequence ID" value="XM_011539004.4"/>
</dbReference>
<dbReference type="RefSeq" id="XP_024305045.1">
    <molecule id="Q96J94-1"/>
    <property type="nucleotide sequence ID" value="XM_024449277.2"/>
</dbReference>
<dbReference type="RefSeq" id="XP_054184909.1">
    <molecule id="Q96J94-1"/>
    <property type="nucleotide sequence ID" value="XM_054328934.1"/>
</dbReference>
<dbReference type="RefSeq" id="XP_054184910.1">
    <molecule id="Q96J94-1"/>
    <property type="nucleotide sequence ID" value="XM_054328935.1"/>
</dbReference>
<dbReference type="RefSeq" id="XP_054184911.1">
    <molecule id="Q96J94-1"/>
    <property type="nucleotide sequence ID" value="XM_054328936.1"/>
</dbReference>
<dbReference type="RefSeq" id="XP_054184912.1">
    <molecule id="Q96J94-1"/>
    <property type="nucleotide sequence ID" value="XM_054328937.1"/>
</dbReference>
<dbReference type="RefSeq" id="XP_054229828.1">
    <molecule id="Q96J94-1"/>
    <property type="nucleotide sequence ID" value="XM_054373853.1"/>
</dbReference>
<dbReference type="RefSeq" id="XP_054229829.1">
    <molecule id="Q96J94-1"/>
    <property type="nucleotide sequence ID" value="XM_054373854.1"/>
</dbReference>
<dbReference type="RefSeq" id="XP_054229830.1">
    <molecule id="Q96J94-1"/>
    <property type="nucleotide sequence ID" value="XM_054373855.1"/>
</dbReference>
<dbReference type="RefSeq" id="XP_054229831.1">
    <molecule id="Q96J94-1"/>
    <property type="nucleotide sequence ID" value="XM_054373856.1"/>
</dbReference>
<dbReference type="PDB" id="2L5C">
    <property type="method" value="NMR"/>
    <property type="chains" value="A=266-399"/>
</dbReference>
<dbReference type="PDB" id="2L5D">
    <property type="method" value="NMR"/>
    <property type="chains" value="A=266-399"/>
</dbReference>
<dbReference type="PDB" id="3O3I">
    <property type="method" value="X-ray"/>
    <property type="resolution" value="2.80 A"/>
    <property type="chains" value="X=277-399"/>
</dbReference>
<dbReference type="PDB" id="3O6E">
    <property type="method" value="X-ray"/>
    <property type="resolution" value="2.90 A"/>
    <property type="chains" value="X=277-399"/>
</dbReference>
<dbReference type="PDB" id="3O7V">
    <property type="method" value="X-ray"/>
    <property type="resolution" value="2.10 A"/>
    <property type="chains" value="X=276-399"/>
</dbReference>
<dbReference type="PDB" id="6PI7">
    <property type="method" value="X-ray"/>
    <property type="resolution" value="2.80 A"/>
    <property type="chains" value="G=2-17"/>
</dbReference>
<dbReference type="PDBsum" id="2L5C"/>
<dbReference type="PDBsum" id="2L5D"/>
<dbReference type="PDBsum" id="3O3I"/>
<dbReference type="PDBsum" id="3O6E"/>
<dbReference type="PDBsum" id="3O7V"/>
<dbReference type="PDBsum" id="6PI7"/>
<dbReference type="BMRB" id="Q96J94"/>
<dbReference type="SMR" id="Q96J94"/>
<dbReference type="BioGRID" id="114690">
    <property type="interactions" value="16"/>
</dbReference>
<dbReference type="DIP" id="DIP-33534N"/>
<dbReference type="FunCoup" id="Q96J94">
    <property type="interactions" value="37"/>
</dbReference>
<dbReference type="IntAct" id="Q96J94">
    <property type="interactions" value="21"/>
</dbReference>
<dbReference type="MINT" id="Q96J94"/>
<dbReference type="STRING" id="9606.ENSP00000245255"/>
<dbReference type="GlyGen" id="Q96J94">
    <property type="glycosylation" value="1 site"/>
</dbReference>
<dbReference type="iPTMnet" id="Q96J94"/>
<dbReference type="PhosphoSitePlus" id="Q96J94"/>
<dbReference type="BioMuta" id="PIWIL1"/>
<dbReference type="DMDM" id="74716803"/>
<dbReference type="MassIVE" id="Q96J94"/>
<dbReference type="PaxDb" id="9606-ENSP00000245255"/>
<dbReference type="PeptideAtlas" id="Q96J94"/>
<dbReference type="ProteomicsDB" id="76913">
    <molecule id="Q96J94-1"/>
</dbReference>
<dbReference type="ProteomicsDB" id="76914">
    <molecule id="Q96J94-2"/>
</dbReference>
<dbReference type="ProteomicsDB" id="76915">
    <molecule id="Q96J94-3"/>
</dbReference>
<dbReference type="Antibodypedia" id="31942">
    <property type="antibodies" value="282 antibodies from 37 providers"/>
</dbReference>
<dbReference type="DNASU" id="9271"/>
<dbReference type="Ensembl" id="ENST00000245255.7">
    <molecule id="Q96J94-1"/>
    <property type="protein sequence ID" value="ENSP00000245255.3"/>
    <property type="gene ID" value="ENSG00000125207.7"/>
</dbReference>
<dbReference type="Ensembl" id="ENST00000613226.2">
    <molecule id="Q96J94-1"/>
    <property type="protein sequence ID" value="ENSP00000481042.1"/>
    <property type="gene ID" value="ENSG00000275051.2"/>
</dbReference>
<dbReference type="Ensembl" id="ENST00000632888.1">
    <molecule id="Q96J94-2"/>
    <property type="protein sequence ID" value="ENSP00000487688.1"/>
    <property type="gene ID" value="ENSG00000275051.2"/>
</dbReference>
<dbReference type="GeneID" id="9271"/>
<dbReference type="KEGG" id="hsa:9271"/>
<dbReference type="MANE-Select" id="ENST00000245255.7">
    <property type="protein sequence ID" value="ENSP00000245255.3"/>
    <property type="RefSeq nucleotide sequence ID" value="NM_004764.5"/>
    <property type="RefSeq protein sequence ID" value="NP_004755.2"/>
</dbReference>
<dbReference type="UCSC" id="uc001uik.4">
    <molecule id="Q96J94-1"/>
    <property type="organism name" value="human"/>
</dbReference>
<dbReference type="AGR" id="HGNC:9007"/>
<dbReference type="CTD" id="9271"/>
<dbReference type="DisGeNET" id="9271"/>
<dbReference type="GeneCards" id="PIWIL1"/>
<dbReference type="HGNC" id="HGNC:9007">
    <property type="gene designation" value="PIWIL1"/>
</dbReference>
<dbReference type="HPA" id="ENSG00000125207">
    <property type="expression patterns" value="Tissue enriched (testis)"/>
</dbReference>
<dbReference type="MIM" id="605571">
    <property type="type" value="gene"/>
</dbReference>
<dbReference type="neXtProt" id="NX_Q96J94"/>
<dbReference type="OpenTargets" id="ENSG00000125207"/>
<dbReference type="PharmGKB" id="PA33341"/>
<dbReference type="VEuPathDB" id="HostDB:ENSG00000125207"/>
<dbReference type="eggNOG" id="KOG1042">
    <property type="taxonomic scope" value="Eukaryota"/>
</dbReference>
<dbReference type="GeneTree" id="ENSGT00950000183200"/>
<dbReference type="HOGENOM" id="CLU_008813_0_0_1"/>
<dbReference type="InParanoid" id="Q96J94"/>
<dbReference type="OMA" id="RRDFHDT"/>
<dbReference type="OrthoDB" id="445936at2759"/>
<dbReference type="PAN-GO" id="Q96J94">
    <property type="GO annotations" value="4 GO annotations based on evolutionary models"/>
</dbReference>
<dbReference type="PhylomeDB" id="Q96J94"/>
<dbReference type="TreeFam" id="TF354206"/>
<dbReference type="PathwayCommons" id="Q96J94"/>
<dbReference type="Reactome" id="R-HSA-5601884">
    <property type="pathway name" value="PIWI-interacting RNA (piRNA) biogenesis"/>
</dbReference>
<dbReference type="SignaLink" id="Q96J94"/>
<dbReference type="SIGNOR" id="Q96J94"/>
<dbReference type="BioGRID-ORCS" id="9271">
    <property type="hits" value="12 hits in 1151 CRISPR screens"/>
</dbReference>
<dbReference type="CD-CODE" id="278829DE">
    <property type="entry name" value="Chromatoid body"/>
</dbReference>
<dbReference type="ChiTaRS" id="PIWIL1">
    <property type="organism name" value="human"/>
</dbReference>
<dbReference type="EvolutionaryTrace" id="Q96J94"/>
<dbReference type="GeneWiki" id="PIWIL1"/>
<dbReference type="GenomeRNAi" id="9271"/>
<dbReference type="Pharos" id="Q96J94">
    <property type="development level" value="Tbio"/>
</dbReference>
<dbReference type="PRO" id="PR:Q96J94"/>
<dbReference type="Proteomes" id="UP000005640">
    <property type="component" value="Chromosome 12"/>
</dbReference>
<dbReference type="RNAct" id="Q96J94">
    <property type="molecule type" value="protein"/>
</dbReference>
<dbReference type="Bgee" id="ENSG00000125207">
    <property type="expression patterns" value="Expressed in right testis and 63 other cell types or tissues"/>
</dbReference>
<dbReference type="ExpressionAtlas" id="Q96J94">
    <property type="expression patterns" value="baseline and differential"/>
</dbReference>
<dbReference type="GO" id="GO:0033391">
    <property type="term" value="C:chromatoid body"/>
    <property type="evidence" value="ECO:0000250"/>
    <property type="project" value="UniProtKB"/>
</dbReference>
<dbReference type="GO" id="GO:0005737">
    <property type="term" value="C:cytoplasm"/>
    <property type="evidence" value="ECO:0000250"/>
    <property type="project" value="UniProtKB"/>
</dbReference>
<dbReference type="GO" id="GO:0097433">
    <property type="term" value="C:dense body"/>
    <property type="evidence" value="ECO:0007669"/>
    <property type="project" value="Ensembl"/>
</dbReference>
<dbReference type="GO" id="GO:0005634">
    <property type="term" value="C:nucleus"/>
    <property type="evidence" value="ECO:0000318"/>
    <property type="project" value="GO_Central"/>
</dbReference>
<dbReference type="GO" id="GO:0043186">
    <property type="term" value="C:P granule"/>
    <property type="evidence" value="ECO:0000250"/>
    <property type="project" value="UniProtKB"/>
</dbReference>
<dbReference type="GO" id="GO:0046872">
    <property type="term" value="F:metal ion binding"/>
    <property type="evidence" value="ECO:0007669"/>
    <property type="project" value="UniProtKB-KW"/>
</dbReference>
<dbReference type="GO" id="GO:0003729">
    <property type="term" value="F:mRNA binding"/>
    <property type="evidence" value="ECO:0000250"/>
    <property type="project" value="UniProtKB"/>
</dbReference>
<dbReference type="GO" id="GO:0140262">
    <property type="term" value="F:mRNA cap binding complex binding"/>
    <property type="evidence" value="ECO:0007669"/>
    <property type="project" value="Ensembl"/>
</dbReference>
<dbReference type="GO" id="GO:0034584">
    <property type="term" value="F:piRNA binding"/>
    <property type="evidence" value="ECO:0000314"/>
    <property type="project" value="UniProtKB"/>
</dbReference>
<dbReference type="GO" id="GO:0019901">
    <property type="term" value="F:protein kinase binding"/>
    <property type="evidence" value="ECO:0007669"/>
    <property type="project" value="Ensembl"/>
</dbReference>
<dbReference type="GO" id="GO:0004521">
    <property type="term" value="F:RNA endonuclease activity"/>
    <property type="evidence" value="ECO:0000250"/>
    <property type="project" value="UniProtKB"/>
</dbReference>
<dbReference type="GO" id="GO:0003727">
    <property type="term" value="F:single-stranded RNA binding"/>
    <property type="evidence" value="ECO:0007669"/>
    <property type="project" value="Ensembl"/>
</dbReference>
<dbReference type="GO" id="GO:0051321">
    <property type="term" value="P:meiotic cell cycle"/>
    <property type="evidence" value="ECO:0007669"/>
    <property type="project" value="UniProtKB-KW"/>
</dbReference>
<dbReference type="GO" id="GO:0034587">
    <property type="term" value="P:piRNA processing"/>
    <property type="evidence" value="ECO:0000318"/>
    <property type="project" value="GO_Central"/>
</dbReference>
<dbReference type="GO" id="GO:0140991">
    <property type="term" value="P:piRNA-mediated gene silencing by mRNA destabilization"/>
    <property type="evidence" value="ECO:0007669"/>
    <property type="project" value="Ensembl"/>
</dbReference>
<dbReference type="GO" id="GO:0140990">
    <property type="term" value="P:primary piRNA processing"/>
    <property type="evidence" value="ECO:0000250"/>
    <property type="project" value="UniProtKB"/>
</dbReference>
<dbReference type="GO" id="GO:0006417">
    <property type="term" value="P:regulation of translation"/>
    <property type="evidence" value="ECO:0007669"/>
    <property type="project" value="UniProtKB-KW"/>
</dbReference>
<dbReference type="GO" id="GO:0031047">
    <property type="term" value="P:regulatory ncRNA-mediated gene silencing"/>
    <property type="evidence" value="ECO:0000250"/>
    <property type="project" value="UniProtKB"/>
</dbReference>
<dbReference type="GO" id="GO:0035092">
    <property type="term" value="P:sperm DNA condensation"/>
    <property type="evidence" value="ECO:0000250"/>
    <property type="project" value="UniProtKB"/>
</dbReference>
<dbReference type="GO" id="GO:0007286">
    <property type="term" value="P:spermatid development"/>
    <property type="evidence" value="ECO:0000315"/>
    <property type="project" value="UniProtKB"/>
</dbReference>
<dbReference type="GO" id="GO:0007283">
    <property type="term" value="P:spermatogenesis"/>
    <property type="evidence" value="ECO:0000250"/>
    <property type="project" value="UniProtKB"/>
</dbReference>
<dbReference type="GO" id="GO:0141006">
    <property type="term" value="P:transposable element silencing by piRNA-mediated heterochromatin formation"/>
    <property type="evidence" value="ECO:0000250"/>
    <property type="project" value="UniProtKB"/>
</dbReference>
<dbReference type="CDD" id="cd02845">
    <property type="entry name" value="PAZ_piwi_like"/>
    <property type="match status" value="1"/>
</dbReference>
<dbReference type="CDD" id="cd04658">
    <property type="entry name" value="Piwi_piwi-like_Euk"/>
    <property type="match status" value="1"/>
</dbReference>
<dbReference type="FunFam" id="3.30.420.10:FF:000014">
    <property type="entry name" value="Piwi-like RNA-mediated gene silencing 1"/>
    <property type="match status" value="1"/>
</dbReference>
<dbReference type="FunFam" id="3.40.50.2300:FF:000131">
    <property type="entry name" value="Piwi-like RNA-mediated gene silencing 1"/>
    <property type="match status" value="1"/>
</dbReference>
<dbReference type="FunFam" id="2.170.260.10:FF:000003">
    <property type="entry name" value="Piwi-like RNA-mediated gene silencing 2"/>
    <property type="match status" value="1"/>
</dbReference>
<dbReference type="Gene3D" id="3.40.50.2300">
    <property type="match status" value="1"/>
</dbReference>
<dbReference type="Gene3D" id="2.170.260.10">
    <property type="entry name" value="paz domain"/>
    <property type="match status" value="1"/>
</dbReference>
<dbReference type="Gene3D" id="3.30.420.10">
    <property type="entry name" value="Ribonuclease H-like superfamily/Ribonuclease H"/>
    <property type="match status" value="1"/>
</dbReference>
<dbReference type="InterPro" id="IPR014811">
    <property type="entry name" value="ArgoL1"/>
</dbReference>
<dbReference type="InterPro" id="IPR031320">
    <property type="entry name" value="GAGE"/>
</dbReference>
<dbReference type="InterPro" id="IPR003100">
    <property type="entry name" value="PAZ_dom"/>
</dbReference>
<dbReference type="InterPro" id="IPR036085">
    <property type="entry name" value="PAZ_dom_sf"/>
</dbReference>
<dbReference type="InterPro" id="IPR003165">
    <property type="entry name" value="Piwi"/>
</dbReference>
<dbReference type="InterPro" id="IPR012337">
    <property type="entry name" value="RNaseH-like_sf"/>
</dbReference>
<dbReference type="InterPro" id="IPR036397">
    <property type="entry name" value="RNaseH_sf"/>
</dbReference>
<dbReference type="PANTHER" id="PTHR22891">
    <property type="entry name" value="EUKARYOTIC TRANSLATION INITIATION FACTOR 2C"/>
    <property type="match status" value="1"/>
</dbReference>
<dbReference type="Pfam" id="PF08699">
    <property type="entry name" value="ArgoL1"/>
    <property type="match status" value="1"/>
</dbReference>
<dbReference type="Pfam" id="PF05831">
    <property type="entry name" value="GAGE"/>
    <property type="match status" value="1"/>
</dbReference>
<dbReference type="Pfam" id="PF02170">
    <property type="entry name" value="PAZ"/>
    <property type="match status" value="1"/>
</dbReference>
<dbReference type="Pfam" id="PF02171">
    <property type="entry name" value="Piwi"/>
    <property type="match status" value="1"/>
</dbReference>
<dbReference type="Pfam" id="PF23278">
    <property type="entry name" value="Piwi_N"/>
    <property type="match status" value="1"/>
</dbReference>
<dbReference type="SMART" id="SM01379">
    <property type="entry name" value="GAGE"/>
    <property type="match status" value="1"/>
</dbReference>
<dbReference type="SMART" id="SM00949">
    <property type="entry name" value="PAZ"/>
    <property type="match status" value="1"/>
</dbReference>
<dbReference type="SMART" id="SM00950">
    <property type="entry name" value="Piwi"/>
    <property type="match status" value="1"/>
</dbReference>
<dbReference type="SUPFAM" id="SSF101690">
    <property type="entry name" value="PAZ domain"/>
    <property type="match status" value="1"/>
</dbReference>
<dbReference type="SUPFAM" id="SSF53098">
    <property type="entry name" value="Ribonuclease H-like"/>
    <property type="match status" value="1"/>
</dbReference>
<dbReference type="PROSITE" id="PS50821">
    <property type="entry name" value="PAZ"/>
    <property type="match status" value="1"/>
</dbReference>
<dbReference type="PROSITE" id="PS50822">
    <property type="entry name" value="PIWI"/>
    <property type="match status" value="1"/>
</dbReference>
<organism>
    <name type="scientific">Homo sapiens</name>
    <name type="common">Human</name>
    <dbReference type="NCBI Taxonomy" id="9606"/>
    <lineage>
        <taxon>Eukaryota</taxon>
        <taxon>Metazoa</taxon>
        <taxon>Chordata</taxon>
        <taxon>Craniata</taxon>
        <taxon>Vertebrata</taxon>
        <taxon>Euteleostomi</taxon>
        <taxon>Mammalia</taxon>
        <taxon>Eutheria</taxon>
        <taxon>Euarchontoglires</taxon>
        <taxon>Primates</taxon>
        <taxon>Haplorrhini</taxon>
        <taxon>Catarrhini</taxon>
        <taxon>Hominidae</taxon>
        <taxon>Homo</taxon>
    </lineage>
</organism>
<name>PIWL1_HUMAN</name>
<comment type="function">
    <text evidence="2">Endoribonuclease that plays a central role in postnatal germ cells by repressing transposable elements and preventing their mobilization, which is essential for the germline integrity. Acts via the piRNA metabolic process, which mediates the repression of transposable elements during meiosis by forming complexes composed of piRNAs and Piwi proteins and governs the methylation and subsequent repression of transposons. Directly binds methylated piRNAs, a class of 24 to 30 nucleotide RNAs that are generated by a Dicer-independent mechanism and are primarily derived from transposons and other repeated sequence elements. Strongly prefers a uridine in the first position of their guide (g1U preference, also named 1U-bias). Not involved in the piRNA amplification loop, also named ping-pong amplification cycle. Acts as an endoribonuclease that cleaves transposon messenger RNAs. Besides their function in transposable elements repression, piRNAs are probably involved in other processes during meiosis such as translation regulation. Probable component of some RISC complex, which mediates RNA cleavage and translational silencing. Also plays a role in the formation of chromatoid bodies and is required for some miRNAs stability. Required to sequester RNF8 in the cytoplasm until late spermatogenesis; RNF8 being released upon ubiquitination and degradation of PIWIL1.</text>
</comment>
<comment type="function">
    <molecule>Isoform 3</molecule>
    <text evidence="7 10">May be a negative developmental regulator (PubMed:12037681, PubMed:16287078).</text>
</comment>
<comment type="cofactor">
    <cofactor evidence="2">
        <name>Mg(2+)</name>
        <dbReference type="ChEBI" id="CHEBI:18420"/>
    </cofactor>
</comment>
<comment type="subunit">
    <text evidence="2">Interacts (via Piwi domain) with DICER1, suggesting that it forms ribonucleoprotein RISC complexes; this interaction is regulated by HSP90AB1 activity. Interacts with MAEL, KIF17, PABPC1, PRMT5 and WDR77. Interacts (when methylated on arginine residues) with TDRD1, TDRKH/TDRD2, RNF17/TDRD4, TDRD6, TDRD7 and TDRD9. Interacts with CLOCK. Interacts with MOV10L1. Interacts with ANAPC10; interaction oly takes place following piRNA-binding. Interacts with RNF8; leading to sequester RNF8 in the cytoplasm. Interacts with TEX19 (By similarity).</text>
</comment>
<comment type="interaction">
    <interactant intactId="EBI-527417">
        <id>Q96J94</id>
    </interactant>
    <interactant intactId="EBI-930964">
        <id>P54253</id>
        <label>ATXN1</label>
    </interactant>
    <organismsDiffer>false</organismsDiffer>
    <experiments>3</experiments>
</comment>
<comment type="interaction">
    <interactant intactId="EBI-527417">
        <id>Q96J94</id>
    </interactant>
    <interactant intactId="EBI-395506">
        <id>Q9UPY3</id>
        <label>DICER1</label>
    </interactant>
    <organismsDiffer>false</organismsDiffer>
    <experiments>2</experiments>
</comment>
<comment type="interaction">
    <interactant intactId="EBI-527417">
        <id>Q96J94</id>
    </interactant>
    <interactant intactId="EBI-10968534">
        <id>P50570-2</id>
        <label>DNM2</label>
    </interactant>
    <organismsDiffer>false</organismsDiffer>
    <experiments>3</experiments>
</comment>
<comment type="interaction">
    <interactant intactId="EBI-527417">
        <id>Q96J94</id>
    </interactant>
    <interactant intactId="EBI-466029">
        <id>P42858</id>
        <label>HTT</label>
    </interactant>
    <organismsDiffer>false</organismsDiffer>
    <experiments>3</experiments>
</comment>
<comment type="interaction">
    <interactant intactId="EBI-527417">
        <id>Q96J94</id>
    </interactant>
    <interactant intactId="EBI-1055254">
        <id>Q8WXH2</id>
        <label>JPH3</label>
    </interactant>
    <organismsDiffer>false</organismsDiffer>
    <experiments>3</experiments>
</comment>
<comment type="interaction">
    <interactant intactId="EBI-527417">
        <id>Q96J94</id>
    </interactant>
    <interactant intactId="EBI-1044112">
        <id>Q7KZF4</id>
        <label>SND1</label>
    </interactant>
    <organismsDiffer>false</organismsDiffer>
    <experiments>4</experiments>
</comment>
<comment type="subcellular location">
    <subcellularLocation>
        <location evidence="2">Cytoplasm</location>
    </subcellularLocation>
    <text evidence="2">Component of the meiotic nuage, also named P granule, a germ-cell-specific organelle required to repress transposon activity during meiosis. Also present in chromatoid body.</text>
</comment>
<comment type="alternative products">
    <event type="alternative splicing"/>
    <isoform>
        <id>Q96J94-1</id>
        <name>1</name>
        <sequence type="displayed"/>
    </isoform>
    <isoform>
        <id>Q96J94-2</id>
        <name>2</name>
        <sequence type="described" ref="VSP_018368 VSP_018369"/>
    </isoform>
    <isoform>
        <id>Q96J94-3</id>
        <name>3</name>
        <sequence type="described" ref="VSP_018366 VSP_018367"/>
    </isoform>
</comment>
<comment type="tissue specificity">
    <text evidence="6 7 8 13">Expressed in spermatocytes and spermatids. Also detected in prostate cancer (at protein level). Detected in most fetal and adult tissues. Expressed in testes, specifically in germline cells; detected in spermatocytes and spermatids during spermatogenesis. Increased expression in testicular tumors originating from embryonic germ cells with retention of germ cells phenotype. No expression in testicular tumors of somatic origin, such as Sertoli cell and Leydig cell tumors. Overexpressed in gastric cancer cells. Isoform 3: Ubiquitously expressed, and specifically in CD34(+) hematopoietic progenitor cells but not in more differentiated cells.</text>
</comment>
<comment type="induction">
    <molecule>Isoform 3</molecule>
    <text evidence="6">Down-regulated in CD34(+) hematopoietic cells during differentiation.</text>
</comment>
<comment type="domain">
    <text evidence="2 11 12">The PAZ domain specifically recognizes binds the 2'-O-methylated 3'-end of piRNAs (PubMed:21193640, PubMed:21465557). The MID region is required for recognition of uridine in the first position of piRNAs (g1U preference, also named 1U-bias) (By similarity).</text>
</comment>
<comment type="domain">
    <text evidence="19">The D-box (destruction box) acts as a recognition signal for association with the APC/C complex, ubiquitination and degradation.</text>
</comment>
<comment type="PTM">
    <text evidence="2">Arginine methylation by PRMT5 is required for the interaction with Tudor domain-containing protein (TDRD1, TDRKH/TDRD2, RNF17/TDRD4, TDRD6, TDRD7 and TDRD9) and subsequent localization to the meiotic nuage, also named P granule.</text>
</comment>
<comment type="PTM">
    <text evidence="2 19">Ubiquitinated by the anaphase promoting complex/cyclosome (APC/C) in late spermatids, leading to its degradation (PubMed:28552346). Ubiquitination only takes place following piRNA-binding in adult testis (By similarity). Ubiquitination and degradation in late spermatogenesis by APC/C is probably required to release RNF8 from the cytoplasm and promote histone to protamine exchange by RNF8 (By similarity).</text>
</comment>
<comment type="disease">
    <text evidence="14">Defects in PIWIL1 may be a cause of a disorder resulting in the absence of sperm (azoospermia) in the semen, leading to male infertility. Male sterility can be caused by defects in ubiquitination and degradation during late spermatogenesis.</text>
</comment>
<comment type="similarity">
    <text evidence="18">Belongs to the argonaute family. Piwi subfamily.</text>
</comment>
<feature type="chain" id="PRO_0000234567" description="Piwi-like protein 1">
    <location>
        <begin position="1"/>
        <end position="861"/>
    </location>
</feature>
<feature type="domain" description="PAZ" evidence="3">
    <location>
        <begin position="278"/>
        <end position="391"/>
    </location>
</feature>
<feature type="domain" description="Piwi" evidence="4">
    <location>
        <begin position="555"/>
        <end position="847"/>
    </location>
</feature>
<feature type="region of interest" description="Disordered" evidence="5">
    <location>
        <begin position="1"/>
        <end position="64"/>
    </location>
</feature>
<feature type="region of interest" description="Required for binding 2'-O-methylated 3'-end of piRNAs" evidence="11">
    <location>
        <begin position="316"/>
        <end position="318"/>
    </location>
</feature>
<feature type="region of interest" description="MID region" evidence="2">
    <location>
        <begin position="479"/>
        <end position="615"/>
    </location>
</feature>
<feature type="short sequence motif" description="D-box" evidence="14">
    <location>
        <begin position="217"/>
        <end position="224"/>
    </location>
</feature>
<feature type="compositionally biased region" description="Basic residues" evidence="5">
    <location>
        <begin position="1"/>
        <end position="13"/>
    </location>
</feature>
<feature type="compositionally biased region" description="Polar residues" evidence="5">
    <location>
        <begin position="17"/>
        <end position="27"/>
    </location>
</feature>
<feature type="active site" evidence="1">
    <location>
        <position position="632"/>
    </location>
</feature>
<feature type="active site" evidence="1">
    <location>
        <position position="670"/>
    </location>
</feature>
<feature type="active site" evidence="1">
    <location>
        <position position="702"/>
    </location>
</feature>
<feature type="active site" evidence="1">
    <location>
        <position position="836"/>
    </location>
</feature>
<feature type="site" description="Required for binding 2'-O-methylated 3'-end of piRNAs" evidence="11">
    <location>
        <position position="381"/>
    </location>
</feature>
<feature type="modified residue" description="Omega-N-methylarginine; by PRMT5; alternate" evidence="2">
    <location>
        <position position="14"/>
    </location>
</feature>
<feature type="modified residue" description="Symmetric dimethylarginine; by PRMT5; alternate" evidence="2">
    <location>
        <position position="14"/>
    </location>
</feature>
<feature type="modified residue" description="Omega-N-methylarginine; by PRMT5" evidence="2">
    <location>
        <position position="49"/>
    </location>
</feature>
<feature type="modified residue" description="Omega-N-methylarginine; alternate" evidence="2">
    <location>
        <position position="53"/>
    </location>
</feature>
<feature type="modified residue" description="Symmetric dimethylarginine; alternate" evidence="2">
    <location>
        <position position="53"/>
    </location>
</feature>
<feature type="modified residue" description="Omega-N-methylarginine; by PRMT5" evidence="2">
    <location>
        <position position="370"/>
    </location>
</feature>
<feature type="splice variant" id="VSP_018366" description="In isoform 3." evidence="15">
    <location>
        <begin position="1"/>
        <end position="86"/>
    </location>
</feature>
<feature type="splice variant" id="VSP_018367" description="In isoform 3." evidence="15">
    <original>HDL</original>
    <variation>MIF</variation>
    <location>
        <begin position="87"/>
        <end position="89"/>
    </location>
</feature>
<feature type="splice variant" id="VSP_018368" description="In isoform 2." evidence="16">
    <original>GVIRVP</original>
    <variation>VSASTC</variation>
    <location>
        <begin position="824"/>
        <end position="829"/>
    </location>
</feature>
<feature type="splice variant" id="VSP_018369" description="In isoform 2." evidence="16">
    <location>
        <begin position="830"/>
        <end position="861"/>
    </location>
</feature>
<feature type="sequence variant" id="VAR_078965" description="Found in a patient with azoospermia; likely pathogenic; requires 2 nucleotide substitutions." evidence="14">
    <original>R</original>
    <variation>A</variation>
    <location>
        <position position="217"/>
    </location>
</feature>
<feature type="sequence variant" id="VAR_078966" description="Found in a patient with azoospermia; likely pathogenic; requires 2 nucleotide substitutions." evidence="14">
    <original>L</original>
    <variation>A</variation>
    <location>
        <position position="220"/>
    </location>
</feature>
<feature type="sequence variant" id="VAR_078967" description="Found in a patient with azoospermia; likely pathogenic; requires 2 nucleotide substitutions." evidence="14">
    <original>L</original>
    <variation>G</variation>
    <location>
        <position position="220"/>
    </location>
</feature>
<feature type="sequence variant" id="VAR_078968" description="Found in a patient with azoospermia; likely pathogenic." evidence="14">
    <original>L</original>
    <variation>R</variation>
    <location>
        <position position="220"/>
    </location>
</feature>
<feature type="sequence variant" id="VAR_078969" description="Found in a patient with azoospermia; likely pathogenic." evidence="14">
    <original>N</original>
    <variation>H</variation>
    <location>
        <position position="224"/>
    </location>
</feature>
<feature type="sequence variant" id="VAR_026288" description="In dbSNP:rs17856812." evidence="9">
    <original>K</original>
    <variation>N</variation>
    <location>
        <position position="491"/>
    </location>
</feature>
<feature type="sequence variant" id="VAR_026289" description="In dbSNP:rs1106042." evidence="9">
    <original>R</original>
    <variation>K</variation>
    <location>
        <position position="527"/>
    </location>
</feature>
<feature type="sequence variant" id="VAR_026290" description="In dbSNP:rs17852568." evidence="9">
    <original>L</original>
    <variation>P</variation>
    <location>
        <position position="575"/>
    </location>
</feature>
<feature type="mutagenesis site" description="Impairs binding to 2'-O-methylated 3'-end of piRNAs; when associated with Y-381." evidence="11">
    <original>P</original>
    <variation>H</variation>
    <location>
        <position position="379"/>
    </location>
</feature>
<feature type="mutagenesis site" description="Impairs binding to 2'-O-methylated 3'-end of piRNAs; when associated with H-379." evidence="11">
    <original>M</original>
    <variation>Y</variation>
    <location>
        <position position="381"/>
    </location>
</feature>
<feature type="sequence conflict" description="In Ref. 4; BAC04068." evidence="18" ref="4">
    <original>V</original>
    <variation>A</variation>
    <location>
        <position position="178"/>
    </location>
</feature>
<feature type="sequence conflict" description="In Ref. 2; AAC97371." evidence="18" ref="2">
    <original>N</original>
    <variation>I</variation>
    <location>
        <position position="314"/>
    </location>
</feature>
<feature type="sequence conflict" description="In Ref. 2; AAC97371." evidence="18" ref="2">
    <original>E</original>
    <variation>G</variation>
    <location>
        <position position="339"/>
    </location>
</feature>
<feature type="sequence conflict" description="In Ref. 6; BAF49084." evidence="18" ref="6">
    <original>E</original>
    <variation>K</variation>
    <location>
        <position position="353"/>
    </location>
</feature>
<feature type="helix" evidence="25">
    <location>
        <begin position="279"/>
        <end position="285"/>
    </location>
</feature>
<feature type="helix" evidence="23">
    <location>
        <begin position="286"/>
        <end position="288"/>
    </location>
</feature>
<feature type="helix" evidence="25">
    <location>
        <begin position="292"/>
        <end position="303"/>
    </location>
</feature>
<feature type="strand" evidence="25">
    <location>
        <begin position="307"/>
        <end position="310"/>
    </location>
</feature>
<feature type="turn" evidence="22">
    <location>
        <begin position="311"/>
        <end position="314"/>
    </location>
</feature>
<feature type="strand" evidence="25">
    <location>
        <begin position="316"/>
        <end position="318"/>
    </location>
</feature>
<feature type="strand" evidence="25">
    <location>
        <begin position="321"/>
        <end position="323"/>
    </location>
</feature>
<feature type="strand" evidence="25">
    <location>
        <begin position="331"/>
        <end position="333"/>
    </location>
</feature>
<feature type="strand" evidence="22">
    <location>
        <begin position="335"/>
        <end position="337"/>
    </location>
</feature>
<feature type="strand" evidence="25">
    <location>
        <begin position="339"/>
        <end position="341"/>
    </location>
</feature>
<feature type="helix" evidence="25">
    <location>
        <begin position="342"/>
        <end position="350"/>
    </location>
</feature>
<feature type="strand" evidence="25">
    <location>
        <begin position="361"/>
        <end position="364"/>
    </location>
</feature>
<feature type="strand" evidence="22">
    <location>
        <begin position="370"/>
        <end position="375"/>
    </location>
</feature>
<feature type="strand" evidence="25">
    <location>
        <begin position="380"/>
        <end position="382"/>
    </location>
</feature>
<feature type="helix" evidence="25">
    <location>
        <begin position="384"/>
        <end position="386"/>
    </location>
</feature>
<feature type="strand" evidence="24">
    <location>
        <begin position="387"/>
        <end position="389"/>
    </location>
</feature>
<gene>
    <name type="primary">PIWIL1</name>
    <name evidence="15 17" type="synonym">HIWI</name>
</gene>
<reference key="1">
    <citation type="journal article" date="2001" name="Blood">
        <title>Human CD34+ stem cells express the hiwi gene, a human homologue of the Drosophila gene piwi.</title>
        <authorList>
            <person name="Sharma A.K."/>
            <person name="Nelson M.C."/>
            <person name="Brandt J.E."/>
            <person name="Wessman M."/>
            <person name="Mahmud N."/>
            <person name="Weller K.P."/>
            <person name="Hoffman R."/>
        </authorList>
    </citation>
    <scope>NUCLEOTIDE SEQUENCE [MRNA] (ISOFORM 3)</scope>
    <scope>TISSUE SPECIFICITY</scope>
    <scope>INDUCTION</scope>
    <source>
        <tissue>Testis</tissue>
    </source>
</reference>
<reference key="2">
    <citation type="journal article" date="2002" name="Oncogene">
        <title>Molecular characterization of hiwi, a human member of the piwi gene family whose overexpression is correlated to seminomas.</title>
        <authorList>
            <person name="Qiao D."/>
            <person name="Zeeman A.-M."/>
            <person name="Deng W."/>
            <person name="Looijenga L.H.J."/>
            <person name="Lin H."/>
        </authorList>
    </citation>
    <scope>NUCLEOTIDE SEQUENCE [MRNA] (ISOFORM 1)</scope>
    <scope>FUNCTION (ISOFORM 3)</scope>
    <scope>TISSUE SPECIFICITY</scope>
    <source>
        <tissue>Testis</tissue>
    </source>
</reference>
<reference key="3">
    <citation type="submission" date="2001-05" db="EMBL/GenBank/DDBJ databases">
        <title>Cloning and identification of human piwi protein related to testis development.</title>
        <authorList>
            <person name="Sha J.H."/>
        </authorList>
    </citation>
    <scope>NUCLEOTIDE SEQUENCE [MRNA] (ISOFORM 1)</scope>
    <source>
        <tissue>Testis</tissue>
    </source>
</reference>
<reference key="4">
    <citation type="journal article" date="2004" name="Nat. Genet.">
        <title>Complete sequencing and characterization of 21,243 full-length human cDNAs.</title>
        <authorList>
            <person name="Ota T."/>
            <person name="Suzuki Y."/>
            <person name="Nishikawa T."/>
            <person name="Otsuki T."/>
            <person name="Sugiyama T."/>
            <person name="Irie R."/>
            <person name="Wakamatsu A."/>
            <person name="Hayashi K."/>
            <person name="Sato H."/>
            <person name="Nagai K."/>
            <person name="Kimura K."/>
            <person name="Makita H."/>
            <person name="Sekine M."/>
            <person name="Obayashi M."/>
            <person name="Nishi T."/>
            <person name="Shibahara T."/>
            <person name="Tanaka T."/>
            <person name="Ishii S."/>
            <person name="Yamamoto J."/>
            <person name="Saito K."/>
            <person name="Kawai Y."/>
            <person name="Isono Y."/>
            <person name="Nakamura Y."/>
            <person name="Nagahari K."/>
            <person name="Murakami K."/>
            <person name="Yasuda T."/>
            <person name="Iwayanagi T."/>
            <person name="Wagatsuma M."/>
            <person name="Shiratori A."/>
            <person name="Sudo H."/>
            <person name="Hosoiri T."/>
            <person name="Kaku Y."/>
            <person name="Kodaira H."/>
            <person name="Kondo H."/>
            <person name="Sugawara M."/>
            <person name="Takahashi M."/>
            <person name="Kanda K."/>
            <person name="Yokoi T."/>
            <person name="Furuya T."/>
            <person name="Kikkawa E."/>
            <person name="Omura Y."/>
            <person name="Abe K."/>
            <person name="Kamihara K."/>
            <person name="Katsuta N."/>
            <person name="Sato K."/>
            <person name="Tanikawa M."/>
            <person name="Yamazaki M."/>
            <person name="Ninomiya K."/>
            <person name="Ishibashi T."/>
            <person name="Yamashita H."/>
            <person name="Murakawa K."/>
            <person name="Fujimori K."/>
            <person name="Tanai H."/>
            <person name="Kimata M."/>
            <person name="Watanabe M."/>
            <person name="Hiraoka S."/>
            <person name="Chiba Y."/>
            <person name="Ishida S."/>
            <person name="Ono Y."/>
            <person name="Takiguchi S."/>
            <person name="Watanabe S."/>
            <person name="Yosida M."/>
            <person name="Hotuta T."/>
            <person name="Kusano J."/>
            <person name="Kanehori K."/>
            <person name="Takahashi-Fujii A."/>
            <person name="Hara H."/>
            <person name="Tanase T.-O."/>
            <person name="Nomura Y."/>
            <person name="Togiya S."/>
            <person name="Komai F."/>
            <person name="Hara R."/>
            <person name="Takeuchi K."/>
            <person name="Arita M."/>
            <person name="Imose N."/>
            <person name="Musashino K."/>
            <person name="Yuuki H."/>
            <person name="Oshima A."/>
            <person name="Sasaki N."/>
            <person name="Aotsuka S."/>
            <person name="Yoshikawa Y."/>
            <person name="Matsunawa H."/>
            <person name="Ichihara T."/>
            <person name="Shiohata N."/>
            <person name="Sano S."/>
            <person name="Moriya S."/>
            <person name="Momiyama H."/>
            <person name="Satoh N."/>
            <person name="Takami S."/>
            <person name="Terashima Y."/>
            <person name="Suzuki O."/>
            <person name="Nakagawa S."/>
            <person name="Senoh A."/>
            <person name="Mizoguchi H."/>
            <person name="Goto Y."/>
            <person name="Shimizu F."/>
            <person name="Wakebe H."/>
            <person name="Hishigaki H."/>
            <person name="Watanabe T."/>
            <person name="Sugiyama A."/>
            <person name="Takemoto M."/>
            <person name="Kawakami B."/>
            <person name="Yamazaki M."/>
            <person name="Watanabe K."/>
            <person name="Kumagai A."/>
            <person name="Itakura S."/>
            <person name="Fukuzumi Y."/>
            <person name="Fujimori Y."/>
            <person name="Komiyama M."/>
            <person name="Tashiro H."/>
            <person name="Tanigami A."/>
            <person name="Fujiwara T."/>
            <person name="Ono T."/>
            <person name="Yamada K."/>
            <person name="Fujii Y."/>
            <person name="Ozaki K."/>
            <person name="Hirao M."/>
            <person name="Ohmori Y."/>
            <person name="Kawabata A."/>
            <person name="Hikiji T."/>
            <person name="Kobatake N."/>
            <person name="Inagaki H."/>
            <person name="Ikema Y."/>
            <person name="Okamoto S."/>
            <person name="Okitani R."/>
            <person name="Kawakami T."/>
            <person name="Noguchi S."/>
            <person name="Itoh T."/>
            <person name="Shigeta K."/>
            <person name="Senba T."/>
            <person name="Matsumura K."/>
            <person name="Nakajima Y."/>
            <person name="Mizuno T."/>
            <person name="Morinaga M."/>
            <person name="Sasaki M."/>
            <person name="Togashi T."/>
            <person name="Oyama M."/>
            <person name="Hata H."/>
            <person name="Watanabe M."/>
            <person name="Komatsu T."/>
            <person name="Mizushima-Sugano J."/>
            <person name="Satoh T."/>
            <person name="Shirai Y."/>
            <person name="Takahashi Y."/>
            <person name="Nakagawa K."/>
            <person name="Okumura K."/>
            <person name="Nagase T."/>
            <person name="Nomura N."/>
            <person name="Kikuchi H."/>
            <person name="Masuho Y."/>
            <person name="Yamashita R."/>
            <person name="Nakai K."/>
            <person name="Yada T."/>
            <person name="Nakamura Y."/>
            <person name="Ohara O."/>
            <person name="Isogai T."/>
            <person name="Sugano S."/>
        </authorList>
    </citation>
    <scope>NUCLEOTIDE SEQUENCE [LARGE SCALE MRNA] (ISOFORM 2)</scope>
    <source>
        <tissue>Testis</tissue>
    </source>
</reference>
<reference key="5">
    <citation type="journal article" date="2004" name="Genome Res.">
        <title>The status, quality, and expansion of the NIH full-length cDNA project: the Mammalian Gene Collection (MGC).</title>
        <authorList>
            <consortium name="The MGC Project Team"/>
        </authorList>
    </citation>
    <scope>NUCLEOTIDE SEQUENCE [LARGE SCALE MRNA] (ISOFORM 1)</scope>
    <scope>VARIANTS ASN-491; LYS-527 AND PRO-575</scope>
    <source>
        <tissue>Testis</tissue>
    </source>
</reference>
<reference key="6">
    <citation type="journal article" date="2007" name="Biochem. Biophys. Res. Commun.">
        <title>The induction of H3K9 methylation by PIWIL4 at the p16Ink4a locus.</title>
        <authorList>
            <person name="Sugimoto K."/>
            <person name="Kage H."/>
            <person name="Aki N."/>
            <person name="Sano A."/>
            <person name="Kitagawa H."/>
            <person name="Nagase T."/>
            <person name="Yatomi Y."/>
            <person name="Ohishi N."/>
            <person name="Takai D."/>
        </authorList>
    </citation>
    <scope>NUCLEOTIDE SEQUENCE [MRNA] OF 1-530</scope>
</reference>
<reference key="7">
    <citation type="journal article" date="2003" name="Genomics">
        <title>Identification of eight members of the Argonaute family in the human genome.</title>
        <authorList>
            <person name="Sasaki T."/>
            <person name="Shiohama A."/>
            <person name="Minoshima S."/>
            <person name="Shimizu N."/>
        </authorList>
    </citation>
    <scope>TISSUE SPECIFICITY</scope>
</reference>
<reference key="8">
    <citation type="journal article" date="2004" name="EMBO Rep.">
        <title>Characterization of the interactions between mammalian PAZ PIWI domain proteins and Dicer.</title>
        <authorList>
            <person name="Tahbaz N."/>
            <person name="Kolb F.A."/>
            <person name="Zhang H."/>
            <person name="Jaronczyk K."/>
            <person name="Filipowicz W."/>
            <person name="Hobman T.C."/>
        </authorList>
    </citation>
    <scope>INTERACTION WITH DICER1</scope>
</reference>
<reference key="9">
    <citation type="journal article" date="2006" name="Int. J. Cancer">
        <title>Expression of hiwi gene in human gastric cancer was associated with proliferation of cancer cells.</title>
        <authorList>
            <person name="Liu X."/>
            <person name="Sun Y."/>
            <person name="Guo J."/>
            <person name="Ma H."/>
            <person name="Li J."/>
            <person name="Dong B."/>
            <person name="Jin G."/>
            <person name="Zhang J."/>
            <person name="Wu J."/>
            <person name="Meng L."/>
            <person name="Shou C."/>
        </authorList>
    </citation>
    <scope>FUNCTION (ISOFORM 3)</scope>
</reference>
<reference key="10">
    <citation type="journal article" date="2013" name="Proteomics">
        <title>Scanning of novel cancer/testis proteins by human testis proteomic analysis.</title>
        <authorList>
            <person name="Liu M."/>
            <person name="Hu Z."/>
            <person name="Qi L."/>
            <person name="Wang J."/>
            <person name="Zhou T."/>
            <person name="Guo Y."/>
            <person name="Zeng Y."/>
            <person name="Zheng B."/>
            <person name="Wu Y."/>
            <person name="Zhang P."/>
            <person name="Chen X."/>
            <person name="Tu W."/>
            <person name="Zhang T."/>
            <person name="Zhou Q."/>
            <person name="Jiang M."/>
            <person name="Guo X."/>
            <person name="Zhou Z."/>
            <person name="Sha J."/>
        </authorList>
    </citation>
    <scope>TISSUE SPECIFICITY</scope>
</reference>
<reference key="11">
    <citation type="journal article" date="2011" name="Proc. Natl. Acad. Sci. U.S.A.">
        <title>Structural basis for piRNA 2'-O-methylated 3'-end recognition by Piwi PAZ (Piwi/Argonaute/Zwille) domains.</title>
        <authorList>
            <person name="Tian Y."/>
            <person name="Simanshu D.K."/>
            <person name="Ma J.B."/>
            <person name="Patel D.J."/>
        </authorList>
    </citation>
    <scope>X-RAY CRYSTALLOGRAPHY (2.8 ANGSTROMS) OF 277-399 IN COMPLEX WITH METHYLATED SMALL RNA</scope>
    <scope>DOMAIN PAZ</scope>
    <scope>MUTAGENESIS OF PRO-379 AND MET-381</scope>
</reference>
<reference evidence="20 21" key="12">
    <citation type="journal article" date="2011" name="Proteins">
        <title>Structural insights into piRNA recognition by the human PIWI-like 1 PAZ domain.</title>
        <authorList>
            <person name="Zeng L."/>
            <person name="Zhang Q."/>
            <person name="Yan K."/>
            <person name="Zhou M.M."/>
        </authorList>
    </citation>
    <scope>STRUCTURE BY NMR OF 266-399 IN COMPLEX WITH SMALL RNA</scope>
    <scope>DOMAIN PAZ</scope>
</reference>
<reference key="13">
    <citation type="journal article" date="2017" name="Cell">
        <title>Ubiquitination-deficient mutations in human Piwi cause male infertility by impairing histone-to-protamine exchange during spermiogenesis.</title>
        <authorList>
            <person name="Gou L.T."/>
            <person name="Kang J.Y."/>
            <person name="Dai P."/>
            <person name="Wang X."/>
            <person name="Li F."/>
            <person name="Zhao S."/>
            <person name="Zhang M."/>
            <person name="Hua M.M."/>
            <person name="Lu Y."/>
            <person name="Zhu Y."/>
            <person name="Li Z."/>
            <person name="Chen H."/>
            <person name="Wu L.G."/>
            <person name="Li D."/>
            <person name="Fu X.D."/>
            <person name="Li J."/>
            <person name="Shi H.J."/>
            <person name="Liu M.F."/>
        </authorList>
    </citation>
    <scope>VARIANTS ALA-217; ALA-220; ARG-220; GLY-220 AND HIS-224</scope>
    <scope>INVOLVEMENT IN AZOOSPERMIA</scope>
    <scope>UBIQUITINATION</scope>
</reference>
<keyword id="KW-0002">3D-structure</keyword>
<keyword id="KW-0025">Alternative splicing</keyword>
<keyword id="KW-0963">Cytoplasm</keyword>
<keyword id="KW-0217">Developmental protein</keyword>
<keyword id="KW-0221">Differentiation</keyword>
<keyword id="KW-0225">Disease variant</keyword>
<keyword id="KW-0255">Endonuclease</keyword>
<keyword id="KW-0378">Hydrolase</keyword>
<keyword id="KW-0460">Magnesium</keyword>
<keyword id="KW-0469">Meiosis</keyword>
<keyword id="KW-0479">Metal-binding</keyword>
<keyword id="KW-0488">Methylation</keyword>
<keyword id="KW-0540">Nuclease</keyword>
<keyword id="KW-1267">Proteomics identification</keyword>
<keyword id="KW-1185">Reference proteome</keyword>
<keyword id="KW-0694">RNA-binding</keyword>
<keyword id="KW-0943">RNA-mediated gene silencing</keyword>
<keyword id="KW-0744">Spermatogenesis</keyword>
<keyword id="KW-0810">Translation regulation</keyword>
<keyword id="KW-0832">Ubl conjugation</keyword>
<protein>
    <recommendedName>
        <fullName>Piwi-like protein 1</fullName>
        <ecNumber evidence="2">3.1.26.-</ecNumber>
    </recommendedName>
</protein>
<proteinExistence type="evidence at protein level"/>